<keyword id="KW-0024">Alternative initiation</keyword>
<keyword id="KW-0877">Alternative promoter usage</keyword>
<feature type="chain" id="PRO_0000341653" description="Uncharacterized protein VP3">
    <location>
        <begin position="1"/>
        <end position="161"/>
    </location>
</feature>
<proteinExistence type="inferred from homology"/>
<organism>
    <name type="scientific">Sapporo virus (strain Human/United Kingdom/Manchester/1993)</name>
    <name type="common">Hu/SV/Man/1993/UK</name>
    <dbReference type="NCBI Taxonomy" id="82659"/>
    <lineage>
        <taxon>Viruses</taxon>
        <taxon>Riboviria</taxon>
        <taxon>Orthornavirae</taxon>
        <taxon>Pisuviricota</taxon>
        <taxon>Pisoniviricetes</taxon>
        <taxon>Picornavirales</taxon>
        <taxon>Caliciviridae</taxon>
        <taxon>Sapovirus</taxon>
        <taxon>Sapporo virus</taxon>
    </lineage>
</organism>
<comment type="alternative products">
    <event type="alternative promoter"/>
    <event type="alternative initiation"/>
    <isoform>
        <id>Q69015-1</id>
        <name>Uncharacterized protein VP3</name>
        <sequence type="displayed"/>
    </isoform>
    <isoform>
        <id>Q69014-2</id>
        <name>Subgenomic capsid protein</name>
        <name>VP1</name>
        <sequence type="external"/>
    </isoform>
    <isoform>
        <id>Q69014-1</id>
        <name>Genome polyprotein</name>
        <sequence type="external"/>
    </isoform>
</comment>
<comment type="miscellaneous">
    <molecule>Isoform Uncharacterized protein VP3</molecule>
    <text>Produced by alternative initiation from the subgenomic RNA.</text>
</comment>
<comment type="similarity">
    <text evidence="1">Belongs to the sapovirus VP3 family.</text>
</comment>
<name>VP3_SVM93</name>
<reference key="1">
    <citation type="journal article" date="1995" name="Arch. Virol.">
        <title>Human enteric caliciviruses have a unique genome structure and are distinct from the Norwalk-like viruses.</title>
        <authorList>
            <person name="Liu B.L."/>
            <person name="Clarke I.N."/>
            <person name="Caul E.O."/>
            <person name="Lambden P.R."/>
        </authorList>
    </citation>
    <scope>NUCLEOTIDE SEQUENCE [GENOMIC RNA]</scope>
</reference>
<sequence length="161" mass="17469">MAPTQSQSKATTQWSLTRLAQQVRPHPTLLLLIRSNPMGPHSAWSWLLPLVQSNPMSLRQYATALQSFVLLLGTTGCPRELFLDLYRFIPTLTRTLLTSLGCGPGGAVVLRSGYRSLVLACSLGASLLLSYHQGLIPRPSGTQACCLTLSLMLASLSQFLS</sequence>
<dbReference type="EMBL" id="X86560">
    <property type="protein sequence ID" value="CAA60260.1"/>
    <property type="molecule type" value="Genomic_RNA"/>
</dbReference>
<dbReference type="Proteomes" id="UP000113838">
    <property type="component" value="Genome"/>
</dbReference>
<dbReference type="InterPro" id="IPR009949">
    <property type="entry name" value="Sapovirus_VP3"/>
</dbReference>
<dbReference type="Pfam" id="PF07349">
    <property type="entry name" value="DUF1478"/>
    <property type="match status" value="1"/>
</dbReference>
<organismHost>
    <name type="scientific">Homo sapiens</name>
    <name type="common">Human</name>
    <dbReference type="NCBI Taxonomy" id="9606"/>
</organismHost>
<evidence type="ECO:0000305" key="1"/>
<gene>
    <name type="ORF">ORF3</name>
</gene>
<protein>
    <recommendedName>
        <fullName>Uncharacterized protein VP3</fullName>
    </recommendedName>
</protein>
<accession>Q69015</accession>